<gene>
    <name evidence="1" type="primary">PB1</name>
</gene>
<protein>
    <recommendedName>
        <fullName evidence="1">RNA-directed RNA polymerase catalytic subunit</fullName>
        <ecNumber evidence="1">2.7.7.48</ecNumber>
    </recommendedName>
    <alternativeName>
        <fullName evidence="1">Polymerase basic protein 1</fullName>
        <shortName evidence="1">PB1</shortName>
    </alternativeName>
    <alternativeName>
        <fullName evidence="1">RNA-directed RNA polymerase subunit P1</fullName>
    </alternativeName>
</protein>
<organismHost>
    <name type="scientific">Aves</name>
    <dbReference type="NCBI Taxonomy" id="8782"/>
</organismHost>
<organismHost>
    <name type="scientific">Cetacea</name>
    <name type="common">whales</name>
    <dbReference type="NCBI Taxonomy" id="9721"/>
</organismHost>
<organismHost>
    <name type="scientific">Homo sapiens</name>
    <name type="common">Human</name>
    <dbReference type="NCBI Taxonomy" id="9606"/>
</organismHost>
<organismHost>
    <name type="scientific">Phocidae</name>
    <name type="common">true seals</name>
    <dbReference type="NCBI Taxonomy" id="9709"/>
</organismHost>
<organismHost>
    <name type="scientific">Sus scrofa</name>
    <name type="common">Pig</name>
    <dbReference type="NCBI Taxonomy" id="9823"/>
</organismHost>
<feature type="chain" id="PRO_0000279604" description="RNA-directed RNA polymerase catalytic subunit">
    <location>
        <begin position="1"/>
        <end position="758"/>
    </location>
</feature>
<feature type="domain" description="RdRp catalytic" evidence="1">
    <location>
        <begin position="286"/>
        <end position="483"/>
    </location>
</feature>
<feature type="region of interest" description="Disordered" evidence="2">
    <location>
        <begin position="50"/>
        <end position="76"/>
    </location>
</feature>
<feature type="region of interest" description="Promoter-binding site" evidence="1">
    <location>
        <begin position="249"/>
        <end position="256"/>
    </location>
</feature>
<feature type="short sequence motif" description="Nuclear localization signal" evidence="1">
    <location>
        <begin position="187"/>
        <end position="195"/>
    </location>
</feature>
<feature type="short sequence motif" description="Nuclear localization signal" evidence="1">
    <location>
        <begin position="203"/>
        <end position="216"/>
    </location>
</feature>
<feature type="compositionally biased region" description="Polar residues" evidence="2">
    <location>
        <begin position="55"/>
        <end position="64"/>
    </location>
</feature>
<comment type="function">
    <text evidence="1">RNA-dependent RNA polymerase which is responsible for replication and transcription of virus RNA segments. The transcription of viral mRNAs occurs by a unique mechanism called cap-snatching. 5' methylated caps of cellular mRNAs are cleaved after 10-13 nucleotides by PA. In turn, these short capped RNAs are used as primers by PB1 for transcription of viral mRNAs. During virus replication, PB1 initiates RNA synthesis and copy vRNA into complementary RNA (cRNA) which in turn serves as a template for the production of more vRNAs.</text>
</comment>
<comment type="catalytic activity">
    <reaction evidence="1">
        <text>RNA(n) + a ribonucleoside 5'-triphosphate = RNA(n+1) + diphosphate</text>
        <dbReference type="Rhea" id="RHEA:21248"/>
        <dbReference type="Rhea" id="RHEA-COMP:14527"/>
        <dbReference type="Rhea" id="RHEA-COMP:17342"/>
        <dbReference type="ChEBI" id="CHEBI:33019"/>
        <dbReference type="ChEBI" id="CHEBI:61557"/>
        <dbReference type="ChEBI" id="CHEBI:140395"/>
        <dbReference type="EC" id="2.7.7.48"/>
    </reaction>
</comment>
<comment type="subunit">
    <text evidence="1">Influenza RNA polymerase is composed of three subunits: PB1, PB2 and PA. Interacts (via N-terminus) with PA (via C-terminus). Interacts (via C-terminus) with PB2 (via N-terminus); this interaction is essential for transcription initiation.</text>
</comment>
<comment type="subcellular location">
    <subcellularLocation>
        <location evidence="1">Host nucleus</location>
    </subcellularLocation>
    <subcellularLocation>
        <location evidence="1">Host cytoplasm</location>
    </subcellularLocation>
</comment>
<comment type="PTM">
    <text evidence="1">Phosphorylated by host PRKCA.</text>
</comment>
<comment type="similarity">
    <text evidence="1">Belongs to the influenza viruses polymerase PB1 family.</text>
</comment>
<sequence length="758" mass="86607">MDVNPTLLFLKIPAQNAISTTFPYTGDPPYSHGTGTGYTMDTVNRTHQYSEKGKWTTNTETGAPQLNPIDGPLPEDNEPSGYAQTDCVLEAMAFLEESHPGIFENSCLETMEVVQQTRVDRLTQGRQTYDWTLNRNQPAATALANTIEVFRSNGLTANESGRLIDFLKDVMESMDKEEIEITTHFQRKRRVRDNMTKKMVTQRTIGKKKQRVNKRSYLIRALTLNTMTKDAERGKLKRRAIATPGMQIRGFVYFVETLARSICEKLEQSGLPVGGNEKKAKLANVVRKMMTNSQDTELSFTITGDNTKWNENQNPRMFLAMITYITKNQPEWFRNILSIAPIMFSNKMARLGKGYMFESKRMKLRTQIPAEMLASIDLKYFNESTRKKIEKIRPLLIDGTASLSPGMMMGMFNMLSTVLGVSILNLGQKKYTKTTYWWDGLQSSDDFALIVNAPNHEGIQAGVDRFYRTCKLVGINMSKKKSYINRTGTFEFTSFFYRYGFVANFSMELPSFGVSGINESADMSIGVTVIKNNMINNDLGPATAQMALQLFIKDYRYTYRCHRGDTQIQTRRSFELKKLWEQTRSKAGLLVSDGGPNLYNIRNLHIPEVCLKWELMDEDYQGRLCNPLNPFVSHKEIESVNNAVVMPAHGPAKSMEYDAVATTHSWIPKRNRSILNTSQRGILEDEQMYQKCCNLFEKFFPSSSYRRPVGISSMVEAMVSRARIDARIDFESGRIKKEEFSEIMKICSTIEELRRQKQ</sequence>
<organism>
    <name type="scientific">Influenza A virus (strain A/Memphis/2/1978 H3N2)</name>
    <dbReference type="NCBI Taxonomy" id="383580"/>
    <lineage>
        <taxon>Viruses</taxon>
        <taxon>Riboviria</taxon>
        <taxon>Orthornavirae</taxon>
        <taxon>Negarnaviricota</taxon>
        <taxon>Polyploviricotina</taxon>
        <taxon>Insthoviricetes</taxon>
        <taxon>Articulavirales</taxon>
        <taxon>Orthomyxoviridae</taxon>
        <taxon>Alphainfluenzavirus</taxon>
        <taxon>Alphainfluenzavirus influenzae</taxon>
        <taxon>Influenza A virus</taxon>
    </lineage>
</organism>
<evidence type="ECO:0000255" key="1">
    <source>
        <dbReference type="HAMAP-Rule" id="MF_04065"/>
    </source>
</evidence>
<evidence type="ECO:0000256" key="2">
    <source>
        <dbReference type="SAM" id="MobiDB-lite"/>
    </source>
</evidence>
<name>RDRP_I78A7</name>
<reference key="1">
    <citation type="submission" date="2005-12" db="EMBL/GenBank/DDBJ databases">
        <title>The NIAID influenza genome sequencing project.</title>
        <authorList>
            <person name="Ghedin E."/>
            <person name="Spiro D."/>
            <person name="Miller N."/>
            <person name="Zaborsky J."/>
            <person name="Feldblyum T."/>
            <person name="Subbu V."/>
            <person name="Shumway M."/>
            <person name="Sparenborg J."/>
            <person name="Groveman L."/>
            <person name="Halpin R."/>
            <person name="Sitz J."/>
            <person name="Koo H."/>
            <person name="Salzberg S.L."/>
            <person name="Webster R.G."/>
            <person name="Hoffmann E."/>
            <person name="Krauss S."/>
            <person name="Naeve C."/>
            <person name="Bao Y."/>
            <person name="Bolotov P."/>
            <person name="Dernovoy D."/>
            <person name="Kiryutin B."/>
            <person name="Lipman D.J."/>
            <person name="Tatusova T."/>
        </authorList>
    </citation>
    <scope>NUCLEOTIDE SEQUENCE [GENOMIC RNA]</scope>
</reference>
<keyword id="KW-1262">Eukaryotic host gene expression shutoff by virus</keyword>
<keyword id="KW-1191">Eukaryotic host transcription shutoff by virus</keyword>
<keyword id="KW-1035">Host cytoplasm</keyword>
<keyword id="KW-1190">Host gene expression shutoff by virus</keyword>
<keyword id="KW-1048">Host nucleus</keyword>
<keyword id="KW-0945">Host-virus interaction</keyword>
<keyword id="KW-1104">Inhibition of host RNA polymerase II by virus</keyword>
<keyword id="KW-0547">Nucleotide-binding</keyword>
<keyword id="KW-0548">Nucleotidyltransferase</keyword>
<keyword id="KW-0597">Phosphoprotein</keyword>
<keyword id="KW-0696">RNA-directed RNA polymerase</keyword>
<keyword id="KW-0808">Transferase</keyword>
<keyword id="KW-0693">Viral RNA replication</keyword>
<keyword id="KW-1195">Viral transcription</keyword>
<dbReference type="EC" id="2.7.7.48" evidence="1"/>
<dbReference type="EMBL" id="CY006697">
    <property type="protein sequence ID" value="ABB96327.1"/>
    <property type="molecule type" value="Genomic_RNA"/>
</dbReference>
<dbReference type="SMR" id="Q2VNE5"/>
<dbReference type="Proteomes" id="UP000007555">
    <property type="component" value="Genome"/>
</dbReference>
<dbReference type="GO" id="GO:0030430">
    <property type="term" value="C:host cell cytoplasm"/>
    <property type="evidence" value="ECO:0007669"/>
    <property type="project" value="UniProtKB-SubCell"/>
</dbReference>
<dbReference type="GO" id="GO:0042025">
    <property type="term" value="C:host cell nucleus"/>
    <property type="evidence" value="ECO:0007669"/>
    <property type="project" value="UniProtKB-SubCell"/>
</dbReference>
<dbReference type="GO" id="GO:0000166">
    <property type="term" value="F:nucleotide binding"/>
    <property type="evidence" value="ECO:0007669"/>
    <property type="project" value="UniProtKB-UniRule"/>
</dbReference>
<dbReference type="GO" id="GO:0003723">
    <property type="term" value="F:RNA binding"/>
    <property type="evidence" value="ECO:0007669"/>
    <property type="project" value="InterPro"/>
</dbReference>
<dbReference type="GO" id="GO:0003968">
    <property type="term" value="F:RNA-directed RNA polymerase activity"/>
    <property type="evidence" value="ECO:0007669"/>
    <property type="project" value="UniProtKB-UniRule"/>
</dbReference>
<dbReference type="GO" id="GO:0006351">
    <property type="term" value="P:DNA-templated transcription"/>
    <property type="evidence" value="ECO:0007669"/>
    <property type="project" value="UniProtKB-UniRule"/>
</dbReference>
<dbReference type="GO" id="GO:0039657">
    <property type="term" value="P:symbiont-mediated suppression of host gene expression"/>
    <property type="evidence" value="ECO:0007669"/>
    <property type="project" value="UniProtKB-KW"/>
</dbReference>
<dbReference type="GO" id="GO:0039523">
    <property type="term" value="P:symbiont-mediated suppression of host mRNA transcription via inhibition of RNA polymerase II activity"/>
    <property type="evidence" value="ECO:0007669"/>
    <property type="project" value="UniProtKB-UniRule"/>
</dbReference>
<dbReference type="GO" id="GO:0039694">
    <property type="term" value="P:viral RNA genome replication"/>
    <property type="evidence" value="ECO:0007669"/>
    <property type="project" value="UniProtKB-UniRule"/>
</dbReference>
<dbReference type="GO" id="GO:0019083">
    <property type="term" value="P:viral transcription"/>
    <property type="evidence" value="ECO:0007669"/>
    <property type="project" value="UniProtKB-KW"/>
</dbReference>
<dbReference type="Gene3D" id="6.10.140.720">
    <property type="match status" value="1"/>
</dbReference>
<dbReference type="HAMAP" id="MF_04065">
    <property type="entry name" value="INFV_RDRP"/>
    <property type="match status" value="1"/>
</dbReference>
<dbReference type="InterPro" id="IPR007099">
    <property type="entry name" value="RNA-dir_pol_NSvirus"/>
</dbReference>
<dbReference type="InterPro" id="IPR001407">
    <property type="entry name" value="RNA_pol_PB1_influenza"/>
</dbReference>
<dbReference type="Pfam" id="PF00602">
    <property type="entry name" value="Flu_PB1"/>
    <property type="match status" value="1"/>
</dbReference>
<dbReference type="PIRSF" id="PIRSF000827">
    <property type="entry name" value="RdRPol_OMV"/>
    <property type="match status" value="1"/>
</dbReference>
<dbReference type="PROSITE" id="PS50525">
    <property type="entry name" value="RDRP_SSRNA_NEG_SEG"/>
    <property type="match status" value="1"/>
</dbReference>
<proteinExistence type="inferred from homology"/>
<accession>Q2VNE5</accession>